<accession>P0C8Z2</accession>
<accession>P24747</accession>
<protein>
    <recommendedName>
        <fullName evidence="1">Outer membrane protein A</fullName>
    </recommendedName>
    <alternativeName>
        <fullName evidence="1">Outer membrane porin A</fullName>
    </alternativeName>
    <alternativeName>
        <fullName evidence="3">Outer membrane protein 3A</fullName>
    </alternativeName>
</protein>
<dbReference type="EMBL" id="M63352">
    <property type="protein sequence ID" value="AAA24236.1"/>
    <property type="molecule type" value="Genomic_DNA"/>
</dbReference>
<dbReference type="EMBL" id="M63353">
    <property type="protein sequence ID" value="AAA24240.1"/>
    <property type="molecule type" value="Genomic_DNA"/>
</dbReference>
<dbReference type="PIR" id="I62388">
    <property type="entry name" value="I62388"/>
</dbReference>
<dbReference type="BMRB" id="P0C8Z2"/>
<dbReference type="SMR" id="P0C8Z2"/>
<dbReference type="GO" id="GO:0009279">
    <property type="term" value="C:cell outer membrane"/>
    <property type="evidence" value="ECO:0007669"/>
    <property type="project" value="UniProtKB-SubCell"/>
</dbReference>
<dbReference type="GO" id="GO:0046930">
    <property type="term" value="C:pore complex"/>
    <property type="evidence" value="ECO:0007669"/>
    <property type="project" value="UniProtKB-KW"/>
</dbReference>
<dbReference type="GO" id="GO:0015288">
    <property type="term" value="F:porin activity"/>
    <property type="evidence" value="ECO:0007669"/>
    <property type="project" value="UniProtKB-KW"/>
</dbReference>
<dbReference type="GO" id="GO:0006811">
    <property type="term" value="P:monoatomic ion transport"/>
    <property type="evidence" value="ECO:0007669"/>
    <property type="project" value="UniProtKB-KW"/>
</dbReference>
<dbReference type="CDD" id="cd07185">
    <property type="entry name" value="OmpA_C-like"/>
    <property type="match status" value="1"/>
</dbReference>
<dbReference type="FunFam" id="3.30.1330.60:FF:000004">
    <property type="entry name" value="Outer membrane protein A"/>
    <property type="match status" value="1"/>
</dbReference>
<dbReference type="Gene3D" id="2.40.160.20">
    <property type="match status" value="1"/>
</dbReference>
<dbReference type="Gene3D" id="3.30.1330.60">
    <property type="entry name" value="OmpA-like domain"/>
    <property type="match status" value="1"/>
</dbReference>
<dbReference type="InterPro" id="IPR050330">
    <property type="entry name" value="Bact_OuterMem_StrucFunc"/>
</dbReference>
<dbReference type="InterPro" id="IPR011250">
    <property type="entry name" value="OMP/PagP_b-brl"/>
</dbReference>
<dbReference type="InterPro" id="IPR006664">
    <property type="entry name" value="OMP_bac"/>
</dbReference>
<dbReference type="InterPro" id="IPR002368">
    <property type="entry name" value="OmpA"/>
</dbReference>
<dbReference type="InterPro" id="IPR006665">
    <property type="entry name" value="OmpA-like"/>
</dbReference>
<dbReference type="InterPro" id="IPR006690">
    <property type="entry name" value="OMPA-like_CS"/>
</dbReference>
<dbReference type="InterPro" id="IPR036737">
    <property type="entry name" value="OmpA-like_sf"/>
</dbReference>
<dbReference type="InterPro" id="IPR000498">
    <property type="entry name" value="OmpA-like_TM_dom"/>
</dbReference>
<dbReference type="NCBIfam" id="NF008071">
    <property type="entry name" value="PRK10808.1"/>
    <property type="match status" value="1"/>
</dbReference>
<dbReference type="PANTHER" id="PTHR30329:SF21">
    <property type="entry name" value="LIPOPROTEIN YIAD-RELATED"/>
    <property type="match status" value="1"/>
</dbReference>
<dbReference type="PANTHER" id="PTHR30329">
    <property type="entry name" value="STATOR ELEMENT OF FLAGELLAR MOTOR COMPLEX"/>
    <property type="match status" value="1"/>
</dbReference>
<dbReference type="Pfam" id="PF00691">
    <property type="entry name" value="OmpA"/>
    <property type="match status" value="1"/>
</dbReference>
<dbReference type="Pfam" id="PF01389">
    <property type="entry name" value="OmpA_membrane"/>
    <property type="match status" value="1"/>
</dbReference>
<dbReference type="PRINTS" id="PR01021">
    <property type="entry name" value="OMPADOMAIN"/>
</dbReference>
<dbReference type="PRINTS" id="PR01022">
    <property type="entry name" value="OUTRMMBRANEA"/>
</dbReference>
<dbReference type="SUPFAM" id="SSF56925">
    <property type="entry name" value="OMPA-like"/>
    <property type="match status" value="1"/>
</dbReference>
<dbReference type="SUPFAM" id="SSF103088">
    <property type="entry name" value="OmpA-like"/>
    <property type="match status" value="1"/>
</dbReference>
<dbReference type="PROSITE" id="PS01068">
    <property type="entry name" value="OMPA_1"/>
    <property type="match status" value="1"/>
</dbReference>
<dbReference type="PROSITE" id="PS51123">
    <property type="entry name" value="OMPA_2"/>
    <property type="match status" value="1"/>
</dbReference>
<comment type="function">
    <text evidence="1">With TolR probably plays a role in maintaining the position of the peptidoglycan cell wall in the periplasm. Acts as a porin with low permeability that allows slow penetration of small solutes; an internal gate slows down solute passage.</text>
</comment>
<comment type="function">
    <text evidence="1 4">Required for conjugation with F-type plasmids; probably serves as the mating receptor on recipient cells.</text>
</comment>
<comment type="subunit">
    <text evidence="1">Monomer and homodimer.</text>
</comment>
<comment type="subcellular location">
    <subcellularLocation>
        <location evidence="1">Cell outer membrane</location>
        <topology evidence="1">Multi-pass membrane protein</topology>
    </subcellularLocation>
</comment>
<comment type="domain">
    <text evidence="1">The extracellular loops are most variable in sequence, and in some bacteria confer sensitivity to phage and/or colicins.</text>
</comment>
<comment type="similarity">
    <text evidence="4">Belongs to the outer membrane OOP (TC 1.B.6) superfamily. OmpA family.</text>
</comment>
<proteinExistence type="inferred from homology"/>
<organism>
    <name type="scientific">Escherichia fergusonii</name>
    <dbReference type="NCBI Taxonomy" id="564"/>
    <lineage>
        <taxon>Bacteria</taxon>
        <taxon>Pseudomonadati</taxon>
        <taxon>Pseudomonadota</taxon>
        <taxon>Gammaproteobacteria</taxon>
        <taxon>Enterobacterales</taxon>
        <taxon>Enterobacteriaceae</taxon>
        <taxon>Escherichia</taxon>
    </lineage>
</organism>
<gene>
    <name evidence="1" type="primary">ompA</name>
</gene>
<name>OMPA_ESCFE</name>
<sequence length="243" mass="26144">LTAKLGYPITDDLDIYTRLGGMVWRADTKAHNNVTGESEKNHDTGVSPVFAGGVEWAITPEIATRLEYQWTNNIGDANTIGTRPDNGLLSLGVSYRFGQGEAAPVVAPAPAPAPEVQTKHFTLKSDVLFNFNKATLKPEGQAALDQLYSQLSNLDPKDGSVVVLGYTDRIGSDAYNQGLSERRAQSVVDYLISKGIPADKISARGMGESNPVTGNTCDNVKQRAALIDCLAPDRRVEIEVKGI</sequence>
<reference key="1">
    <citation type="journal article" date="1991" name="J. Gen. Microbiol.">
        <title>Molecular and evolutionary relationships among enteric bacteria.</title>
        <authorList>
            <person name="Lawrence J.G."/>
            <person name="Ochman H."/>
            <person name="Hartl D.L."/>
        </authorList>
    </citation>
    <scope>NUCLEOTIDE SEQUENCE [GENOMIC DNA]</scope>
    <source>
        <strain>ATCC 35471 / BCRC 15584 / CDC 1016-74</strain>
        <strain>ATCC 35472 / BCRC 15585 / CDC 3014-74</strain>
    </source>
</reference>
<evidence type="ECO:0000250" key="1">
    <source>
        <dbReference type="UniProtKB" id="P0A910"/>
    </source>
</evidence>
<evidence type="ECO:0000255" key="2">
    <source>
        <dbReference type="PROSITE-ProRule" id="PRU00473"/>
    </source>
</evidence>
<evidence type="ECO:0000303" key="3">
    <source>
    </source>
</evidence>
<evidence type="ECO:0000305" key="4"/>
<keyword id="KW-0998">Cell outer membrane</keyword>
<keyword id="KW-0184">Conjugation</keyword>
<keyword id="KW-1015">Disulfide bond</keyword>
<keyword id="KW-0406">Ion transport</keyword>
<keyword id="KW-0472">Membrane</keyword>
<keyword id="KW-0626">Porin</keyword>
<keyword id="KW-0677">Repeat</keyword>
<keyword id="KW-0812">Transmembrane</keyword>
<keyword id="KW-1134">Transmembrane beta strand</keyword>
<keyword id="KW-0813">Transport</keyword>
<feature type="chain" id="PRO_0000196254" description="Outer membrane protein A">
    <location>
        <begin position="1" status="less than"/>
        <end position="243" status="greater than"/>
    </location>
</feature>
<feature type="transmembrane region" description="Beta stranded" evidence="1">
    <location>
        <begin position="1" status="less than"/>
        <end position="8"/>
    </location>
</feature>
<feature type="transmembrane region" description="Beta stranded" evidence="1">
    <location>
        <begin position="13"/>
        <end position="21"/>
    </location>
</feature>
<feature type="transmembrane region" description="Beta stranded" evidence="1">
    <location>
        <begin position="48"/>
        <end position="57"/>
    </location>
</feature>
<feature type="transmembrane region" description="Beta stranded" evidence="1">
    <location>
        <begin position="62"/>
        <end position="69"/>
    </location>
</feature>
<feature type="transmembrane region" description="Beta stranded" evidence="1">
    <location>
        <begin position="88"/>
        <end position="96"/>
    </location>
</feature>
<feature type="repeat" description="1">
    <location>
        <begin position="107"/>
        <end position="108"/>
    </location>
</feature>
<feature type="repeat" description="2">
    <location>
        <begin position="109"/>
        <end position="110"/>
    </location>
</feature>
<feature type="repeat" description="3">
    <location>
        <begin position="111"/>
        <end position="112"/>
    </location>
</feature>
<feature type="repeat" description="4">
    <location>
        <begin position="113"/>
        <end position="114"/>
    </location>
</feature>
<feature type="domain" description="OmpA-like" evidence="2">
    <location>
        <begin position="116"/>
        <end position="243" status="greater than"/>
    </location>
</feature>
<feature type="region of interest" description="4 X 2 AA tandem repeats of A-P">
    <location>
        <begin position="107"/>
        <end position="114"/>
    </location>
</feature>
<feature type="site" description="Part of salt bridge gating mechanism" evidence="1">
    <location>
        <position position="65"/>
    </location>
</feature>
<feature type="disulfide bond" evidence="1">
    <location>
        <begin position="217"/>
        <end position="229"/>
    </location>
</feature>
<feature type="non-terminal residue">
    <location>
        <position position="1"/>
    </location>
</feature>
<feature type="non-terminal residue">
    <location>
        <position position="243"/>
    </location>
</feature>